<feature type="chain" id="PRO_1000056707" description="Protein FdhE homolog">
    <location>
        <begin position="1"/>
        <end position="309"/>
    </location>
</feature>
<proteinExistence type="inferred from homology"/>
<gene>
    <name evidence="1" type="primary">fdhE</name>
    <name type="ordered locus">KPN78578_41420</name>
    <name type="ORF">KPN_04187</name>
</gene>
<keyword id="KW-0963">Cytoplasm</keyword>
<organism>
    <name type="scientific">Klebsiella pneumoniae subsp. pneumoniae (strain ATCC 700721 / MGH 78578)</name>
    <dbReference type="NCBI Taxonomy" id="272620"/>
    <lineage>
        <taxon>Bacteria</taxon>
        <taxon>Pseudomonadati</taxon>
        <taxon>Pseudomonadota</taxon>
        <taxon>Gammaproteobacteria</taxon>
        <taxon>Enterobacterales</taxon>
        <taxon>Enterobacteriaceae</taxon>
        <taxon>Klebsiella/Raoultella group</taxon>
        <taxon>Klebsiella</taxon>
        <taxon>Klebsiella pneumoniae complex</taxon>
    </lineage>
</organism>
<comment type="function">
    <text evidence="1">Necessary for formate dehydrogenase activity.</text>
</comment>
<comment type="subcellular location">
    <subcellularLocation>
        <location evidence="1">Cytoplasm</location>
    </subcellularLocation>
</comment>
<comment type="similarity">
    <text evidence="1">Belongs to the FdhE family.</text>
</comment>
<sequence>MSIRIIPQDELGSSEKRTAEAIPPLLFPRLKNLYNRRAERLRELAANNPLGDYLRFAALIAHAQEVVLYDHPLQMDLTARIKAASEQGKPPLDIHVLPRDKHWHKLLHSLIAELKPEMSGPALAVIENLEKASEQELEQMASALFVSDFASVSSDKAPFIWAALSLYWAQMASLIPGKARAEYGEQRQFCPVCGSMPVSSIVQIGTTQGLRYLHCNLCETEWHVVRVKCSNCEQSRDLHYWSLDNEQAAVKAESCGDCGTYLKIMYQEKDPKVEAVADDLASLVLDARMEQEGFARSSINPFMFPGEGE</sequence>
<accession>A6TG82</accession>
<dbReference type="EMBL" id="CP000647">
    <property type="protein sequence ID" value="ABR79566.1"/>
    <property type="molecule type" value="Genomic_DNA"/>
</dbReference>
<dbReference type="RefSeq" id="WP_004150358.1">
    <property type="nucleotide sequence ID" value="NC_009648.1"/>
</dbReference>
<dbReference type="SMR" id="A6TG82"/>
<dbReference type="STRING" id="272620.KPN_04187"/>
<dbReference type="jPOST" id="A6TG82"/>
<dbReference type="PaxDb" id="272620-KPN_04187"/>
<dbReference type="EnsemblBacteria" id="ABR79566">
    <property type="protein sequence ID" value="ABR79566"/>
    <property type="gene ID" value="KPN_04187"/>
</dbReference>
<dbReference type="GeneID" id="93275809"/>
<dbReference type="KEGG" id="kpn:KPN_04187"/>
<dbReference type="HOGENOM" id="CLU_055275_0_0_6"/>
<dbReference type="Proteomes" id="UP000000265">
    <property type="component" value="Chromosome"/>
</dbReference>
<dbReference type="GO" id="GO:0005829">
    <property type="term" value="C:cytosol"/>
    <property type="evidence" value="ECO:0007669"/>
    <property type="project" value="TreeGrafter"/>
</dbReference>
<dbReference type="GO" id="GO:0008199">
    <property type="term" value="F:ferric iron binding"/>
    <property type="evidence" value="ECO:0007669"/>
    <property type="project" value="TreeGrafter"/>
</dbReference>
<dbReference type="GO" id="GO:0051604">
    <property type="term" value="P:protein maturation"/>
    <property type="evidence" value="ECO:0007669"/>
    <property type="project" value="TreeGrafter"/>
</dbReference>
<dbReference type="CDD" id="cd16341">
    <property type="entry name" value="FdhE"/>
    <property type="match status" value="1"/>
</dbReference>
<dbReference type="FunFam" id="3.90.1670.10:FF:000001">
    <property type="entry name" value="Protein FdhE"/>
    <property type="match status" value="1"/>
</dbReference>
<dbReference type="Gene3D" id="3.90.1670.10">
    <property type="entry name" value="FdhE-like domain"/>
    <property type="match status" value="1"/>
</dbReference>
<dbReference type="HAMAP" id="MF_00611">
    <property type="entry name" value="FdeH"/>
    <property type="match status" value="1"/>
</dbReference>
<dbReference type="InterPro" id="IPR024064">
    <property type="entry name" value="FdhE-like_sf"/>
</dbReference>
<dbReference type="InterPro" id="IPR056796">
    <property type="entry name" value="FdhE_C"/>
</dbReference>
<dbReference type="InterPro" id="IPR056797">
    <property type="entry name" value="FdhE_central"/>
</dbReference>
<dbReference type="InterPro" id="IPR056774">
    <property type="entry name" value="FdhE_N"/>
</dbReference>
<dbReference type="InterPro" id="IPR006452">
    <property type="entry name" value="Formate_DH_accessory"/>
</dbReference>
<dbReference type="NCBIfam" id="TIGR01562">
    <property type="entry name" value="FdhE"/>
    <property type="match status" value="1"/>
</dbReference>
<dbReference type="NCBIfam" id="NF002925">
    <property type="entry name" value="PRK03564.1"/>
    <property type="match status" value="1"/>
</dbReference>
<dbReference type="PANTHER" id="PTHR37689">
    <property type="entry name" value="PROTEIN FDHE"/>
    <property type="match status" value="1"/>
</dbReference>
<dbReference type="PANTHER" id="PTHR37689:SF1">
    <property type="entry name" value="PROTEIN FDHE"/>
    <property type="match status" value="1"/>
</dbReference>
<dbReference type="Pfam" id="PF24860">
    <property type="entry name" value="FdhE_C"/>
    <property type="match status" value="1"/>
</dbReference>
<dbReference type="Pfam" id="PF24859">
    <property type="entry name" value="FdhE_central"/>
    <property type="match status" value="1"/>
</dbReference>
<dbReference type="Pfam" id="PF04216">
    <property type="entry name" value="FdhE_N"/>
    <property type="match status" value="1"/>
</dbReference>
<dbReference type="PIRSF" id="PIRSF018296">
    <property type="entry name" value="Format_dh_formtn"/>
    <property type="match status" value="1"/>
</dbReference>
<dbReference type="SUPFAM" id="SSF144020">
    <property type="entry name" value="FdhE-like"/>
    <property type="match status" value="1"/>
</dbReference>
<evidence type="ECO:0000255" key="1">
    <source>
        <dbReference type="HAMAP-Rule" id="MF_00611"/>
    </source>
</evidence>
<reference key="1">
    <citation type="submission" date="2006-09" db="EMBL/GenBank/DDBJ databases">
        <authorList>
            <consortium name="The Klebsiella pneumonia Genome Sequencing Project"/>
            <person name="McClelland M."/>
            <person name="Sanderson E.K."/>
            <person name="Spieth J."/>
            <person name="Clifton W.S."/>
            <person name="Latreille P."/>
            <person name="Sabo A."/>
            <person name="Pepin K."/>
            <person name="Bhonagiri V."/>
            <person name="Porwollik S."/>
            <person name="Ali J."/>
            <person name="Wilson R.K."/>
        </authorList>
    </citation>
    <scope>NUCLEOTIDE SEQUENCE [LARGE SCALE GENOMIC DNA]</scope>
    <source>
        <strain>ATCC 700721 / MGH 78578</strain>
    </source>
</reference>
<protein>
    <recommendedName>
        <fullName evidence="1">Protein FdhE homolog</fullName>
    </recommendedName>
</protein>
<name>FDHE_KLEP7</name>